<comment type="function">
    <text evidence="1">Part of the outer membrane protein assembly complex, which is involved in assembly and insertion of beta-barrel proteins into the outer membrane.</text>
</comment>
<comment type="subunit">
    <text evidence="1">Part of the Bam complex, which is composed of the outer membrane protein BamA, and four lipoproteins BamB, BamC, BamD and BamE.</text>
</comment>
<comment type="subcellular location">
    <subcellularLocation>
        <location evidence="1">Cell outer membrane</location>
        <topology evidence="1">Lipid-anchor</topology>
    </subcellularLocation>
</comment>
<comment type="similarity">
    <text evidence="1">Belongs to the BamE family.</text>
</comment>
<gene>
    <name evidence="1" type="primary">bamE</name>
    <name type="synonym">smpA</name>
    <name type="ordered locus">YPO1104</name>
    <name type="ordered locus">y3076</name>
    <name type="ordered locus">YP_1052</name>
</gene>
<organism>
    <name type="scientific">Yersinia pestis</name>
    <dbReference type="NCBI Taxonomy" id="632"/>
    <lineage>
        <taxon>Bacteria</taxon>
        <taxon>Pseudomonadati</taxon>
        <taxon>Pseudomonadota</taxon>
        <taxon>Gammaproteobacteria</taxon>
        <taxon>Enterobacterales</taxon>
        <taxon>Yersiniaceae</taxon>
        <taxon>Yersinia</taxon>
    </lineage>
</organism>
<proteinExistence type="inferred from homology"/>
<reference key="1">
    <citation type="journal article" date="2001" name="Nature">
        <title>Genome sequence of Yersinia pestis, the causative agent of plague.</title>
        <authorList>
            <person name="Parkhill J."/>
            <person name="Wren B.W."/>
            <person name="Thomson N.R."/>
            <person name="Titball R.W."/>
            <person name="Holden M.T.G."/>
            <person name="Prentice M.B."/>
            <person name="Sebaihia M."/>
            <person name="James K.D."/>
            <person name="Churcher C.M."/>
            <person name="Mungall K.L."/>
            <person name="Baker S."/>
            <person name="Basham D."/>
            <person name="Bentley S.D."/>
            <person name="Brooks K."/>
            <person name="Cerdeno-Tarraga A.-M."/>
            <person name="Chillingworth T."/>
            <person name="Cronin A."/>
            <person name="Davies R.M."/>
            <person name="Davis P."/>
            <person name="Dougan G."/>
            <person name="Feltwell T."/>
            <person name="Hamlin N."/>
            <person name="Holroyd S."/>
            <person name="Jagels K."/>
            <person name="Karlyshev A.V."/>
            <person name="Leather S."/>
            <person name="Moule S."/>
            <person name="Oyston P.C.F."/>
            <person name="Quail M.A."/>
            <person name="Rutherford K.M."/>
            <person name="Simmonds M."/>
            <person name="Skelton J."/>
            <person name="Stevens K."/>
            <person name="Whitehead S."/>
            <person name="Barrell B.G."/>
        </authorList>
    </citation>
    <scope>NUCLEOTIDE SEQUENCE [LARGE SCALE GENOMIC DNA]</scope>
    <source>
        <strain>CO-92 / Biovar Orientalis</strain>
    </source>
</reference>
<reference key="2">
    <citation type="journal article" date="2002" name="J. Bacteriol.">
        <title>Genome sequence of Yersinia pestis KIM.</title>
        <authorList>
            <person name="Deng W."/>
            <person name="Burland V."/>
            <person name="Plunkett G. III"/>
            <person name="Boutin A."/>
            <person name="Mayhew G.F."/>
            <person name="Liss P."/>
            <person name="Perna N.T."/>
            <person name="Rose D.J."/>
            <person name="Mau B."/>
            <person name="Zhou S."/>
            <person name="Schwartz D.C."/>
            <person name="Fetherston J.D."/>
            <person name="Lindler L.E."/>
            <person name="Brubaker R.R."/>
            <person name="Plano G.V."/>
            <person name="Straley S.C."/>
            <person name="McDonough K.A."/>
            <person name="Nilles M.L."/>
            <person name="Matson J.S."/>
            <person name="Blattner F.R."/>
            <person name="Perry R.D."/>
        </authorList>
    </citation>
    <scope>NUCLEOTIDE SEQUENCE [LARGE SCALE GENOMIC DNA]</scope>
    <source>
        <strain>KIM10+ / Biovar Mediaevalis</strain>
    </source>
</reference>
<reference key="3">
    <citation type="journal article" date="2004" name="DNA Res.">
        <title>Complete genome sequence of Yersinia pestis strain 91001, an isolate avirulent to humans.</title>
        <authorList>
            <person name="Song Y."/>
            <person name="Tong Z."/>
            <person name="Wang J."/>
            <person name="Wang L."/>
            <person name="Guo Z."/>
            <person name="Han Y."/>
            <person name="Zhang J."/>
            <person name="Pei D."/>
            <person name="Zhou D."/>
            <person name="Qin H."/>
            <person name="Pang X."/>
            <person name="Han Y."/>
            <person name="Zhai J."/>
            <person name="Li M."/>
            <person name="Cui B."/>
            <person name="Qi Z."/>
            <person name="Jin L."/>
            <person name="Dai R."/>
            <person name="Chen F."/>
            <person name="Li S."/>
            <person name="Ye C."/>
            <person name="Du Z."/>
            <person name="Lin W."/>
            <person name="Wang J."/>
            <person name="Yu J."/>
            <person name="Yang H."/>
            <person name="Wang J."/>
            <person name="Huang P."/>
            <person name="Yang R."/>
        </authorList>
    </citation>
    <scope>NUCLEOTIDE SEQUENCE [LARGE SCALE GENOMIC DNA]</scope>
    <source>
        <strain>91001 / Biovar Mediaevalis</strain>
    </source>
</reference>
<accession>Q7CH39</accession>
<accession>Q74W47</accession>
<protein>
    <recommendedName>
        <fullName evidence="1">Outer membrane protein assembly factor BamE</fullName>
    </recommendedName>
</protein>
<sequence>MITMRCKMLTAAAVMLAMLTAGCSTLEKVVYRPDINQGNYLSPIDASKIHKGMTQQQVAYTLGTPMLQDPFGTQTWFYVFRQQPGHEKITQQTLTLTFDSSGVLTDIKNEPALTGS</sequence>
<feature type="signal peptide" evidence="1">
    <location>
        <begin position="1"/>
        <end position="22"/>
    </location>
</feature>
<feature type="chain" id="PRO_0000417873" description="Outer membrane protein assembly factor BamE">
    <location>
        <begin position="23"/>
        <end position="116"/>
    </location>
</feature>
<feature type="lipid moiety-binding region" description="N-palmitoyl cysteine" evidence="1">
    <location>
        <position position="23"/>
    </location>
</feature>
<feature type="lipid moiety-binding region" description="S-diacylglycerol cysteine" evidence="1">
    <location>
        <position position="23"/>
    </location>
</feature>
<name>BAME_YERPE</name>
<dbReference type="EMBL" id="AE009952">
    <property type="protein sequence ID" value="AAM86626.1"/>
    <property type="molecule type" value="Genomic_DNA"/>
</dbReference>
<dbReference type="EMBL" id="AE017042">
    <property type="protein sequence ID" value="AAS61302.1"/>
    <property type="molecule type" value="Genomic_DNA"/>
</dbReference>
<dbReference type="EMBL" id="AL590842">
    <property type="protein sequence ID" value="CAL19770.1"/>
    <property type="molecule type" value="Genomic_DNA"/>
</dbReference>
<dbReference type="PIR" id="AH0135">
    <property type="entry name" value="AH0135"/>
</dbReference>
<dbReference type="RefSeq" id="YP_002346147.1">
    <property type="nucleotide sequence ID" value="NC_003143.1"/>
</dbReference>
<dbReference type="SMR" id="Q7CH39"/>
<dbReference type="STRING" id="214092.YPO1104"/>
<dbReference type="PaxDb" id="214092-YPO1104"/>
<dbReference type="EnsemblBacteria" id="AAS61302">
    <property type="protein sequence ID" value="AAS61302"/>
    <property type="gene ID" value="YP_1052"/>
</dbReference>
<dbReference type="KEGG" id="ype:YPO1104"/>
<dbReference type="KEGG" id="ypk:y3076"/>
<dbReference type="KEGG" id="ypm:YP_1052"/>
<dbReference type="PATRIC" id="fig|214092.21.peg.1396"/>
<dbReference type="eggNOG" id="COG2913">
    <property type="taxonomic scope" value="Bacteria"/>
</dbReference>
<dbReference type="HOGENOM" id="CLU_083835_4_0_6"/>
<dbReference type="OMA" id="FGSNVWY"/>
<dbReference type="OrthoDB" id="9808250at2"/>
<dbReference type="Proteomes" id="UP000000815">
    <property type="component" value="Chromosome"/>
</dbReference>
<dbReference type="Proteomes" id="UP000001019">
    <property type="component" value="Chromosome"/>
</dbReference>
<dbReference type="Proteomes" id="UP000002490">
    <property type="component" value="Chromosome"/>
</dbReference>
<dbReference type="GO" id="GO:1990063">
    <property type="term" value="C:Bam protein complex"/>
    <property type="evidence" value="ECO:0000318"/>
    <property type="project" value="GO_Central"/>
</dbReference>
<dbReference type="GO" id="GO:0030674">
    <property type="term" value="F:protein-macromolecule adaptor activity"/>
    <property type="evidence" value="ECO:0000318"/>
    <property type="project" value="GO_Central"/>
</dbReference>
<dbReference type="GO" id="GO:0043165">
    <property type="term" value="P:Gram-negative-bacterium-type cell outer membrane assembly"/>
    <property type="evidence" value="ECO:0000318"/>
    <property type="project" value="GO_Central"/>
</dbReference>
<dbReference type="GO" id="GO:0051205">
    <property type="term" value="P:protein insertion into membrane"/>
    <property type="evidence" value="ECO:0000318"/>
    <property type="project" value="GO_Central"/>
</dbReference>
<dbReference type="FunFam" id="3.30.1450.10:FF:000001">
    <property type="entry name" value="Outer membrane protein assembly factor BamE"/>
    <property type="match status" value="1"/>
</dbReference>
<dbReference type="Gene3D" id="3.30.1450.10">
    <property type="match status" value="1"/>
</dbReference>
<dbReference type="HAMAP" id="MF_00925">
    <property type="entry name" value="OM_assembly_BamE"/>
    <property type="match status" value="1"/>
</dbReference>
<dbReference type="InterPro" id="IPR026592">
    <property type="entry name" value="BamE"/>
</dbReference>
<dbReference type="InterPro" id="IPR037873">
    <property type="entry name" value="BamE-like"/>
</dbReference>
<dbReference type="InterPro" id="IPR007450">
    <property type="entry name" value="BamE_dom"/>
</dbReference>
<dbReference type="NCBIfam" id="NF008585">
    <property type="entry name" value="PRK11548.1"/>
    <property type="match status" value="1"/>
</dbReference>
<dbReference type="PANTHER" id="PTHR37482">
    <property type="entry name" value="OUTER MEMBRANE PROTEIN ASSEMBLY FACTOR BAME"/>
    <property type="match status" value="1"/>
</dbReference>
<dbReference type="PANTHER" id="PTHR37482:SF1">
    <property type="entry name" value="OUTER MEMBRANE PROTEIN ASSEMBLY FACTOR BAME"/>
    <property type="match status" value="1"/>
</dbReference>
<dbReference type="Pfam" id="PF04355">
    <property type="entry name" value="BamE"/>
    <property type="match status" value="1"/>
</dbReference>
<dbReference type="PROSITE" id="PS51257">
    <property type="entry name" value="PROKAR_LIPOPROTEIN"/>
    <property type="match status" value="1"/>
</dbReference>
<keyword id="KW-0998">Cell outer membrane</keyword>
<keyword id="KW-0449">Lipoprotein</keyword>
<keyword id="KW-0472">Membrane</keyword>
<keyword id="KW-0564">Palmitate</keyword>
<keyword id="KW-1185">Reference proteome</keyword>
<keyword id="KW-0732">Signal</keyword>
<evidence type="ECO:0000255" key="1">
    <source>
        <dbReference type="HAMAP-Rule" id="MF_00925"/>
    </source>
</evidence>